<reference key="1">
    <citation type="journal article" date="1997" name="J. Cell Biol.">
        <title>cdc12p, a protein required for cytokinesis in fission yeast, is a component of the cell division ring and interacts with profilin.</title>
        <authorList>
            <person name="Chang F."/>
            <person name="Drubin D."/>
            <person name="Nurse P."/>
        </authorList>
    </citation>
    <scope>NUCLEOTIDE SEQUENCE [GENOMIC DNA]</scope>
</reference>
<reference key="2">
    <citation type="journal article" date="2002" name="Nature">
        <title>The genome sequence of Schizosaccharomyces pombe.</title>
        <authorList>
            <person name="Wood V."/>
            <person name="Gwilliam R."/>
            <person name="Rajandream M.A."/>
            <person name="Lyne M.H."/>
            <person name="Lyne R."/>
            <person name="Stewart A."/>
            <person name="Sgouros J.G."/>
            <person name="Peat N."/>
            <person name="Hayles J."/>
            <person name="Baker S.G."/>
            <person name="Basham D."/>
            <person name="Bowman S."/>
            <person name="Brooks K."/>
            <person name="Brown D."/>
            <person name="Brown S."/>
            <person name="Chillingworth T."/>
            <person name="Churcher C.M."/>
            <person name="Collins M."/>
            <person name="Connor R."/>
            <person name="Cronin A."/>
            <person name="Davis P."/>
            <person name="Feltwell T."/>
            <person name="Fraser A."/>
            <person name="Gentles S."/>
            <person name="Goble A."/>
            <person name="Hamlin N."/>
            <person name="Harris D.E."/>
            <person name="Hidalgo J."/>
            <person name="Hodgson G."/>
            <person name="Holroyd S."/>
            <person name="Hornsby T."/>
            <person name="Howarth S."/>
            <person name="Huckle E.J."/>
            <person name="Hunt S."/>
            <person name="Jagels K."/>
            <person name="James K.D."/>
            <person name="Jones L."/>
            <person name="Jones M."/>
            <person name="Leather S."/>
            <person name="McDonald S."/>
            <person name="McLean J."/>
            <person name="Mooney P."/>
            <person name="Moule S."/>
            <person name="Mungall K.L."/>
            <person name="Murphy L.D."/>
            <person name="Niblett D."/>
            <person name="Odell C."/>
            <person name="Oliver K."/>
            <person name="O'Neil S."/>
            <person name="Pearson D."/>
            <person name="Quail M.A."/>
            <person name="Rabbinowitsch E."/>
            <person name="Rutherford K.M."/>
            <person name="Rutter S."/>
            <person name="Saunders D."/>
            <person name="Seeger K."/>
            <person name="Sharp S."/>
            <person name="Skelton J."/>
            <person name="Simmonds M.N."/>
            <person name="Squares R."/>
            <person name="Squares S."/>
            <person name="Stevens K."/>
            <person name="Taylor K."/>
            <person name="Taylor R.G."/>
            <person name="Tivey A."/>
            <person name="Walsh S.V."/>
            <person name="Warren T."/>
            <person name="Whitehead S."/>
            <person name="Woodward J.R."/>
            <person name="Volckaert G."/>
            <person name="Aert R."/>
            <person name="Robben J."/>
            <person name="Grymonprez B."/>
            <person name="Weltjens I."/>
            <person name="Vanstreels E."/>
            <person name="Rieger M."/>
            <person name="Schaefer M."/>
            <person name="Mueller-Auer S."/>
            <person name="Gabel C."/>
            <person name="Fuchs M."/>
            <person name="Duesterhoeft A."/>
            <person name="Fritzc C."/>
            <person name="Holzer E."/>
            <person name="Moestl D."/>
            <person name="Hilbert H."/>
            <person name="Borzym K."/>
            <person name="Langer I."/>
            <person name="Beck A."/>
            <person name="Lehrach H."/>
            <person name="Reinhardt R."/>
            <person name="Pohl T.M."/>
            <person name="Eger P."/>
            <person name="Zimmermann W."/>
            <person name="Wedler H."/>
            <person name="Wambutt R."/>
            <person name="Purnelle B."/>
            <person name="Goffeau A."/>
            <person name="Cadieu E."/>
            <person name="Dreano S."/>
            <person name="Gloux S."/>
            <person name="Lelaure V."/>
            <person name="Mottier S."/>
            <person name="Galibert F."/>
            <person name="Aves S.J."/>
            <person name="Xiang Z."/>
            <person name="Hunt C."/>
            <person name="Moore K."/>
            <person name="Hurst S.M."/>
            <person name="Lucas M."/>
            <person name="Rochet M."/>
            <person name="Gaillardin C."/>
            <person name="Tallada V.A."/>
            <person name="Garzon A."/>
            <person name="Thode G."/>
            <person name="Daga R.R."/>
            <person name="Cruzado L."/>
            <person name="Jimenez J."/>
            <person name="Sanchez M."/>
            <person name="del Rey F."/>
            <person name="Benito J."/>
            <person name="Dominguez A."/>
            <person name="Revuelta J.L."/>
            <person name="Moreno S."/>
            <person name="Armstrong J."/>
            <person name="Forsburg S.L."/>
            <person name="Cerutti L."/>
            <person name="Lowe T."/>
            <person name="McCombie W.R."/>
            <person name="Paulsen I."/>
            <person name="Potashkin J."/>
            <person name="Shpakovski G.V."/>
            <person name="Ussery D."/>
            <person name="Barrell B.G."/>
            <person name="Nurse P."/>
        </authorList>
    </citation>
    <scope>NUCLEOTIDE SEQUENCE [LARGE SCALE GENOMIC DNA]</scope>
    <source>
        <strain>972 / ATCC 24843</strain>
    </source>
</reference>
<reference key="3">
    <citation type="journal article" date="2000" name="Genes Cells">
        <title>Large-scale screening of intracellular protein localization in living fission yeast cells by the use of a GFP-fusion genomic DNA library.</title>
        <authorList>
            <person name="Ding D.-Q."/>
            <person name="Tomita Y."/>
            <person name="Yamamoto A."/>
            <person name="Chikashige Y."/>
            <person name="Haraguchi T."/>
            <person name="Hiraoka Y."/>
        </authorList>
    </citation>
    <scope>NUCLEOTIDE SEQUENCE [LARGE SCALE GENOMIC DNA] OF 517-689</scope>
    <scope>SUBCELLULAR LOCATION</scope>
    <source>
        <strain>ATCC 38364 / 968</strain>
    </source>
</reference>
<reference key="4">
    <citation type="journal article" date="2003" name="J. Cell Biol.">
        <title>The fission yeast cytokinesis formin Cdc12p is a barbed end actin filament capping protein gated by profilin.</title>
        <authorList>
            <person name="Kovar D.R."/>
            <person name="Kuhn J.R."/>
            <person name="Tichy A.L."/>
            <person name="Pollard T.D."/>
        </authorList>
    </citation>
    <scope>FUNCTION</scope>
    <scope>SUBUNIT</scope>
    <source>
        <strain>FY436</strain>
    </source>
</reference>
<reference key="5">
    <citation type="journal article" date="2008" name="J. Proteome Res.">
        <title>Phosphoproteome analysis of fission yeast.</title>
        <authorList>
            <person name="Wilson-Grady J.T."/>
            <person name="Villen J."/>
            <person name="Gygi S.P."/>
        </authorList>
    </citation>
    <scope>PHOSPHORYLATION [LARGE SCALE ANALYSIS] AT SER-1541 AND TYR-1544</scope>
    <scope>IDENTIFICATION BY MASS SPECTROMETRY</scope>
</reference>
<organism>
    <name type="scientific">Schizosaccharomyces pombe (strain 972 / ATCC 24843)</name>
    <name type="common">Fission yeast</name>
    <dbReference type="NCBI Taxonomy" id="284812"/>
    <lineage>
        <taxon>Eukaryota</taxon>
        <taxon>Fungi</taxon>
        <taxon>Dikarya</taxon>
        <taxon>Ascomycota</taxon>
        <taxon>Taphrinomycotina</taxon>
        <taxon>Schizosaccharomycetes</taxon>
        <taxon>Schizosaccharomycetales</taxon>
        <taxon>Schizosaccharomycetaceae</taxon>
        <taxon>Schizosaccharomyces</taxon>
    </lineage>
</organism>
<comment type="function">
    <text evidence="6">Plays a role in the cell cycle. Involved in cytokinesis. Component of the cell division ring. In the absence of profilin, caps the barbed end of actin filaments, thus preventing subunit addition and dissociation. In the presence of profilin, nucleates actin filaments that grow rapidly from their barbed ends.</text>
</comment>
<comment type="subunit">
    <text evidence="6">Interacts with profilin and actin at the FH1 and FH2 domains respectively.</text>
</comment>
<comment type="interaction">
    <interactant intactId="EBI-1148281">
        <id>Q10059</id>
    </interactant>
    <interactant intactId="EBI-1148185">
        <id>Q09822</id>
        <label>cdc15</label>
    </interactant>
    <organismsDiffer>false</organismsDiffer>
    <experiments>4</experiments>
</comment>
<comment type="subcellular location">
    <subcellularLocation>
        <location evidence="5">Nucleus</location>
    </subcellularLocation>
    <text>Nuclear, and septum.</text>
</comment>
<comment type="similarity">
    <text evidence="8">Belongs to the formin homology family. BNI1 subfamily.</text>
</comment>
<keyword id="KW-0002">3D-structure</keyword>
<keyword id="KW-0131">Cell cycle</keyword>
<keyword id="KW-0132">Cell division</keyword>
<keyword id="KW-0175">Coiled coil</keyword>
<keyword id="KW-0539">Nucleus</keyword>
<keyword id="KW-0597">Phosphoprotein</keyword>
<keyword id="KW-1185">Reference proteome</keyword>
<accession>Q10059</accession>
<accession>Q9UTU0</accession>
<protein>
    <recommendedName>
        <fullName>Cell division control protein 12</fullName>
    </recommendedName>
</protein>
<sequence length="1841" mass="207599">MRNSSKGQDPNFSYDSILSTPTPSARRTIGPRAPKSKTTYHKPPSSIESVSTLIQPNKSQSVTSPYVKQFTFSSKEYNSHNKHALQNSQLPLPKTPEKSTVHRPKANKVEVTDLPSSSSVEHLHTSKHLKGPRLPKNIIKSSEDVQIAPVTPPVHSRSFDPLPKPPVPSVPVSKTKRRTKHKLAPVVEVPEITNEVSPKFTSTNDEQVYRLRSIRAGSPNSVCSFQFEIPSTRPPSLDQLIHLFNDFLRHPVFDFDENAIEMLQSCTPDEKWCFIRSNFAGFDDPSFQIPELAAVHRPVSWFVIQLWNKTISNLQLITLSSLLSTQSDRWISLFLELQGLRALHNLLTYFNSSAVVQPQQAEVPRCMLTLLKKKPTLVTSNSYIFQAITVTLISPNLLPRKVAADLLTWVLSLKEPLVVSILETGFKEINAEYEKEVPLFFGWIKSFKDIILEKELARTPPSSPARNSASSSPSNIAFLEYCTSTMEFINQLIVACEELEQGFDLDILDSLRESGIHEVIQLLRNFPDQQLEKQLNIYESEEERRTISQTTHEDVDSFMSNESSILSSFNEFASNEVGRLLESTIQNILLAKGTEKQKVKLIKVFNSLLQRILLNSKVSNESFEDSLQASLNMLTERFYSDDTARNALKEAKASRAMAEKMVIERDAMAAQVNLGAEDLIAKLNKEVEDQKDVILSQKRTNETLKTEIDALQKSHVTQIQRSEVELRELYLLINSDSFQGSTNSKERIIEYLLDKLDLRKKEIAAESTLWSNDGIDDKLRDLREQMSRQSSQPSTVSTILQIPDKKFHRPFPRHLHRYVGRSASESLTSEKDESIKSMKGIDDFANLEIPGKGIESNVVIKDISNQTHEINSVENKAETVSNNSKITNFDIPNDATSLPTIITHPTPPPPPPLPVKTSLNTFSHPDSVNIVANDTSVAGVMPAFPPPPPPPPPLVSAAGGKFVSPAVSNNISKDDLHKTTGLTRRPTRRLKQMHWEKLNSGLEFTFWTGPSDEANKILETLHTSGVLDELDESFAMKEAKTLVKKTCARTDYMSSELQKLFGIHFHKLSHKNPNEIIRMILHCDDSMNECVEFLSSDKVLNQPKLKADLEPYRIDWANGGDLVNSEKDASELSRWDYLYVRLIVDLGGYWNQRMNALKVKNIIETNYENLVRQTKLIGRAALELRDSKVFKGLLYLILYLGNYMNDYVRQAKGFAIGSLQRLPLIKNANNTKSLLHILDITIRKHFPQFDNFSPELSTVTEAAKLNIEAIEQECSELIRGCQNLQIDCDSGALSDPTVFHPDDKILSVILPWLMEGTKKMDFLKEHLRTMNTTLNNAMRYFGEQPNDPNSKNLFFKRVDSFIIDYSKARSDNLKSEEEEASQHRRLNLVNNHKEHVLERAMSENNKMDNEAMDGFLDKLRNVKLESHHKPRNRSAITMGKEHLIEAPNTSTKSSPAKNELFVPKRSSVKSDLAKVRPRYPKGSESTDGLSDALNITPTKKGEVSSKAKKGYNYEKRRSGRQVSDSYVLNKNSKNKSNKGRSASYTFSDPSSLEDSNRQKPFNGEKFRRFSSKSRRGSQNRDSKKTGKARKDKGINNNQTSPQNKPSKESLKSDTISNEKKVFPQKASKVNLLTPTISNGTRASKHANEKENTFPRGVENNLVAPMIPNNTELNEDTSAVSRNLENATNDLKETFPTTTTISTARAKPGNNDINTILRRNNSRGRRRMLQQMSPLKSNKFSGTNDLNFQQATKPDGSNKSSYMERLEKLKQNSERHLQSVGGKKVYSSEETPVNKILVSPSVSILDHNRILSQSTPIKSPQRAQEMLAGLLSGKLAPKENEK</sequence>
<evidence type="ECO:0000255" key="1"/>
<evidence type="ECO:0000255" key="2">
    <source>
        <dbReference type="PROSITE-ProRule" id="PRU00579"/>
    </source>
</evidence>
<evidence type="ECO:0000255" key="3">
    <source>
        <dbReference type="PROSITE-ProRule" id="PRU00774"/>
    </source>
</evidence>
<evidence type="ECO:0000256" key="4">
    <source>
        <dbReference type="SAM" id="MobiDB-lite"/>
    </source>
</evidence>
<evidence type="ECO:0000269" key="5">
    <source>
    </source>
</evidence>
<evidence type="ECO:0000269" key="6">
    <source>
    </source>
</evidence>
<evidence type="ECO:0000269" key="7">
    <source>
    </source>
</evidence>
<evidence type="ECO:0000305" key="8"/>
<feature type="chain" id="PRO_0000194901" description="Cell division control protein 12">
    <location>
        <begin position="1"/>
        <end position="1841"/>
    </location>
</feature>
<feature type="domain" description="GBD/FH3" evidence="2">
    <location>
        <begin position="232"/>
        <end position="620"/>
    </location>
</feature>
<feature type="domain" description="FH1">
    <location>
        <begin position="740"/>
        <end position="972"/>
    </location>
</feature>
<feature type="domain" description="FH2" evidence="3">
    <location>
        <begin position="980"/>
        <end position="1391"/>
    </location>
</feature>
<feature type="region of interest" description="Disordered" evidence="4">
    <location>
        <begin position="1"/>
        <end position="63"/>
    </location>
</feature>
<feature type="region of interest" description="Disordered" evidence="4">
    <location>
        <begin position="78"/>
        <end position="134"/>
    </location>
</feature>
<feature type="region of interest" description="Disordered" evidence="4">
    <location>
        <begin position="152"/>
        <end position="181"/>
    </location>
</feature>
<feature type="region of interest" description="Disordered" evidence="4">
    <location>
        <begin position="1445"/>
        <end position="1661"/>
    </location>
</feature>
<feature type="region of interest" description="Disordered" evidence="4">
    <location>
        <begin position="1696"/>
        <end position="1715"/>
    </location>
</feature>
<feature type="region of interest" description="Disordered" evidence="4">
    <location>
        <begin position="1735"/>
        <end position="1758"/>
    </location>
</feature>
<feature type="coiled-coil region" evidence="1">
    <location>
        <begin position="674"/>
        <end position="715"/>
    </location>
</feature>
<feature type="coiled-coil region" evidence="1">
    <location>
        <begin position="1260"/>
        <end position="1290"/>
    </location>
</feature>
<feature type="compositionally biased region" description="Polar residues" evidence="4">
    <location>
        <begin position="1"/>
        <end position="25"/>
    </location>
</feature>
<feature type="compositionally biased region" description="Polar residues" evidence="4">
    <location>
        <begin position="46"/>
        <end position="63"/>
    </location>
</feature>
<feature type="compositionally biased region" description="Polar residues" evidence="4">
    <location>
        <begin position="1447"/>
        <end position="1456"/>
    </location>
</feature>
<feature type="compositionally biased region" description="Polar residues" evidence="4">
    <location>
        <begin position="1483"/>
        <end position="1497"/>
    </location>
</feature>
<feature type="compositionally biased region" description="Basic and acidic residues" evidence="4">
    <location>
        <begin position="1499"/>
        <end position="1516"/>
    </location>
</feature>
<feature type="compositionally biased region" description="Polar residues" evidence="4">
    <location>
        <begin position="1539"/>
        <end position="1553"/>
    </location>
</feature>
<feature type="compositionally biased region" description="Basic and acidic residues" evidence="4">
    <location>
        <begin position="1554"/>
        <end position="1567"/>
    </location>
</feature>
<feature type="compositionally biased region" description="Basic residues" evidence="4">
    <location>
        <begin position="1568"/>
        <end position="1577"/>
    </location>
</feature>
<feature type="compositionally biased region" description="Polar residues" evidence="4">
    <location>
        <begin position="1594"/>
        <end position="1604"/>
    </location>
</feature>
<feature type="compositionally biased region" description="Basic and acidic residues" evidence="4">
    <location>
        <begin position="1605"/>
        <end position="1621"/>
    </location>
</feature>
<feature type="compositionally biased region" description="Polar residues" evidence="4">
    <location>
        <begin position="1630"/>
        <end position="1641"/>
    </location>
</feature>
<feature type="modified residue" description="Phosphoserine" evidence="7">
    <location>
        <position position="1541"/>
    </location>
</feature>
<feature type="modified residue" description="Phosphotyrosine" evidence="7">
    <location>
        <position position="1544"/>
    </location>
</feature>
<dbReference type="EMBL" id="CU329670">
    <property type="protein sequence ID" value="CAA92232.1"/>
    <property type="molecule type" value="Genomic_DNA"/>
</dbReference>
<dbReference type="EMBL" id="AB028006">
    <property type="protein sequence ID" value="BAA87310.1"/>
    <property type="molecule type" value="Genomic_DNA"/>
</dbReference>
<dbReference type="PIR" id="T38091">
    <property type="entry name" value="T38091"/>
</dbReference>
<dbReference type="RefSeq" id="NP_592869.1">
    <property type="nucleotide sequence ID" value="NM_001018269.2"/>
</dbReference>
<dbReference type="PDB" id="8RTT">
    <property type="method" value="EM"/>
    <property type="resolution" value="3.56 A"/>
    <property type="chains" value="E/F=972-1390"/>
</dbReference>
<dbReference type="PDB" id="8RTY">
    <property type="method" value="EM"/>
    <property type="resolution" value="6.25 A"/>
    <property type="chains" value="E/F=881-1390"/>
</dbReference>
<dbReference type="PDBsum" id="8RTT"/>
<dbReference type="PDBsum" id="8RTY"/>
<dbReference type="EMDB" id="EMD-19496"/>
<dbReference type="EMDB" id="EMD-19497"/>
<dbReference type="EMDB" id="EMD-19499"/>
<dbReference type="SMR" id="Q10059"/>
<dbReference type="BioGRID" id="278100">
    <property type="interactions" value="23"/>
</dbReference>
<dbReference type="FunCoup" id="Q10059">
    <property type="interactions" value="126"/>
</dbReference>
<dbReference type="IntAct" id="Q10059">
    <property type="interactions" value="1"/>
</dbReference>
<dbReference type="STRING" id="284812.Q10059"/>
<dbReference type="iPTMnet" id="Q10059"/>
<dbReference type="PaxDb" id="4896-SPAC1F5.04c.1"/>
<dbReference type="EnsemblFungi" id="SPAC1F5.04c.1">
    <property type="protein sequence ID" value="SPAC1F5.04c.1:pep"/>
    <property type="gene ID" value="SPAC1F5.04c"/>
</dbReference>
<dbReference type="GeneID" id="2541603"/>
<dbReference type="KEGG" id="spo:2541603"/>
<dbReference type="PomBase" id="SPAC1F5.04c">
    <property type="gene designation" value="cdc12"/>
</dbReference>
<dbReference type="VEuPathDB" id="FungiDB:SPAC1F5.04c"/>
<dbReference type="eggNOG" id="KOG1922">
    <property type="taxonomic scope" value="Eukaryota"/>
</dbReference>
<dbReference type="HOGENOM" id="CLU_002224_0_0_1"/>
<dbReference type="InParanoid" id="Q10059"/>
<dbReference type="OMA" id="NHYWKAR"/>
<dbReference type="PhylomeDB" id="Q10059"/>
<dbReference type="PRO" id="PR:Q10059"/>
<dbReference type="Proteomes" id="UP000002485">
    <property type="component" value="Chromosome I"/>
</dbReference>
<dbReference type="GO" id="GO:0032153">
    <property type="term" value="C:cell division site"/>
    <property type="evidence" value="ECO:0000314"/>
    <property type="project" value="PomBase"/>
</dbReference>
<dbReference type="GO" id="GO:0005737">
    <property type="term" value="C:cytoplasm"/>
    <property type="evidence" value="ECO:0000314"/>
    <property type="project" value="PomBase"/>
</dbReference>
<dbReference type="GO" id="GO:0043332">
    <property type="term" value="C:mating projection tip"/>
    <property type="evidence" value="ECO:0000318"/>
    <property type="project" value="GO_Central"/>
</dbReference>
<dbReference type="GO" id="GO:0031097">
    <property type="term" value="C:medial cortex"/>
    <property type="evidence" value="ECO:0000314"/>
    <property type="project" value="PomBase"/>
</dbReference>
<dbReference type="GO" id="GO:0071341">
    <property type="term" value="C:medial cortical node"/>
    <property type="evidence" value="ECO:0000314"/>
    <property type="project" value="PomBase"/>
</dbReference>
<dbReference type="GO" id="GO:0110085">
    <property type="term" value="C:mitotic actomyosin contractile ring"/>
    <property type="evidence" value="ECO:0000314"/>
    <property type="project" value="PomBase"/>
</dbReference>
<dbReference type="GO" id="GO:0120104">
    <property type="term" value="C:mitotic actomyosin contractile ring, proximal layer"/>
    <property type="evidence" value="ECO:0000314"/>
    <property type="project" value="PomBase"/>
</dbReference>
<dbReference type="GO" id="GO:0005634">
    <property type="term" value="C:nucleus"/>
    <property type="evidence" value="ECO:0007669"/>
    <property type="project" value="UniProtKB-SubCell"/>
</dbReference>
<dbReference type="GO" id="GO:0051015">
    <property type="term" value="F:actin filament binding"/>
    <property type="evidence" value="ECO:0000314"/>
    <property type="project" value="PomBase"/>
</dbReference>
<dbReference type="GO" id="GO:1990808">
    <property type="term" value="F:F-bar domain binding"/>
    <property type="evidence" value="ECO:0000353"/>
    <property type="project" value="PomBase"/>
</dbReference>
<dbReference type="GO" id="GO:0031267">
    <property type="term" value="F:small GTPase binding"/>
    <property type="evidence" value="ECO:0007669"/>
    <property type="project" value="InterPro"/>
</dbReference>
<dbReference type="GO" id="GO:0051017">
    <property type="term" value="P:actin filament bundle assembly"/>
    <property type="evidence" value="ECO:0000318"/>
    <property type="project" value="GO_Central"/>
</dbReference>
<dbReference type="GO" id="GO:0030041">
    <property type="term" value="P:actin filament polymerization"/>
    <property type="evidence" value="ECO:0000314"/>
    <property type="project" value="PomBase"/>
</dbReference>
<dbReference type="GO" id="GO:0051016">
    <property type="term" value="P:barbed-end actin filament capping"/>
    <property type="evidence" value="ECO:0000314"/>
    <property type="project" value="PomBase"/>
</dbReference>
<dbReference type="GO" id="GO:1903475">
    <property type="term" value="P:mitotic actomyosin contractile ring assembly"/>
    <property type="evidence" value="ECO:0000315"/>
    <property type="project" value="PomBase"/>
</dbReference>
<dbReference type="GO" id="GO:1904498">
    <property type="term" value="P:protein localization to mitotic actomyosin contractile ring"/>
    <property type="evidence" value="ECO:0000315"/>
    <property type="project" value="PomBase"/>
</dbReference>
<dbReference type="FunFam" id="1.25.10.10:FF:000997">
    <property type="entry name" value="Cell fusion protein fus1"/>
    <property type="match status" value="1"/>
</dbReference>
<dbReference type="FunFam" id="1.20.58.2220:FF:000006">
    <property type="entry name" value="Cytokinesis protein sepA"/>
    <property type="match status" value="1"/>
</dbReference>
<dbReference type="Gene3D" id="6.10.30.50">
    <property type="match status" value="1"/>
</dbReference>
<dbReference type="Gene3D" id="1.20.58.2220">
    <property type="entry name" value="Formin, FH2 domain"/>
    <property type="match status" value="1"/>
</dbReference>
<dbReference type="Gene3D" id="1.25.10.10">
    <property type="entry name" value="Leucine-rich Repeat Variant"/>
    <property type="match status" value="1"/>
</dbReference>
<dbReference type="InterPro" id="IPR051661">
    <property type="entry name" value="Actin_filament_regulator"/>
</dbReference>
<dbReference type="InterPro" id="IPR011989">
    <property type="entry name" value="ARM-like"/>
</dbReference>
<dbReference type="InterPro" id="IPR016024">
    <property type="entry name" value="ARM-type_fold"/>
</dbReference>
<dbReference type="InterPro" id="IPR015425">
    <property type="entry name" value="FH2_Formin"/>
</dbReference>
<dbReference type="InterPro" id="IPR042201">
    <property type="entry name" value="FH2_Formin_sf"/>
</dbReference>
<dbReference type="InterPro" id="IPR010472">
    <property type="entry name" value="FH3_dom"/>
</dbReference>
<dbReference type="InterPro" id="IPR014768">
    <property type="entry name" value="GBD/FH3_dom"/>
</dbReference>
<dbReference type="InterPro" id="IPR010473">
    <property type="entry name" value="GTPase-bd"/>
</dbReference>
<dbReference type="PANTHER" id="PTHR47102:SF5">
    <property type="entry name" value="CELL DIVISION CONTROL PROTEIN 12"/>
    <property type="match status" value="1"/>
</dbReference>
<dbReference type="PANTHER" id="PTHR47102">
    <property type="entry name" value="PROTEIN BNI1"/>
    <property type="match status" value="1"/>
</dbReference>
<dbReference type="Pfam" id="PF06367">
    <property type="entry name" value="Drf_FH3"/>
    <property type="match status" value="1"/>
</dbReference>
<dbReference type="Pfam" id="PF06371">
    <property type="entry name" value="Drf_GBD"/>
    <property type="match status" value="1"/>
</dbReference>
<dbReference type="Pfam" id="PF02181">
    <property type="entry name" value="FH2"/>
    <property type="match status" value="1"/>
</dbReference>
<dbReference type="SMART" id="SM01139">
    <property type="entry name" value="Drf_FH3"/>
    <property type="match status" value="1"/>
</dbReference>
<dbReference type="SMART" id="SM01140">
    <property type="entry name" value="Drf_GBD"/>
    <property type="match status" value="1"/>
</dbReference>
<dbReference type="SMART" id="SM00498">
    <property type="entry name" value="FH2"/>
    <property type="match status" value="1"/>
</dbReference>
<dbReference type="SUPFAM" id="SSF48371">
    <property type="entry name" value="ARM repeat"/>
    <property type="match status" value="1"/>
</dbReference>
<dbReference type="SUPFAM" id="SSF101447">
    <property type="entry name" value="Formin homology 2 domain (FH2 domain)"/>
    <property type="match status" value="1"/>
</dbReference>
<dbReference type="PROSITE" id="PS51444">
    <property type="entry name" value="FH2"/>
    <property type="match status" value="1"/>
</dbReference>
<dbReference type="PROSITE" id="PS51232">
    <property type="entry name" value="GBD_FH3"/>
    <property type="match status" value="1"/>
</dbReference>
<gene>
    <name type="primary">cdc12</name>
    <name type="ORF">SPAC1F5.04c</name>
</gene>
<proteinExistence type="evidence at protein level"/>
<name>CDC12_SCHPO</name>